<dbReference type="EC" id="6.1.1.10" evidence="1"/>
<dbReference type="EMBL" id="CP000512">
    <property type="protein sequence ID" value="ABM34379.1"/>
    <property type="molecule type" value="Genomic_DNA"/>
</dbReference>
<dbReference type="RefSeq" id="WP_011796866.1">
    <property type="nucleotide sequence ID" value="NC_008752.1"/>
</dbReference>
<dbReference type="SMR" id="A1TTU1"/>
<dbReference type="STRING" id="397945.Aave_3834"/>
<dbReference type="GeneID" id="79788842"/>
<dbReference type="KEGG" id="aav:Aave_3834"/>
<dbReference type="eggNOG" id="COG0073">
    <property type="taxonomic scope" value="Bacteria"/>
</dbReference>
<dbReference type="eggNOG" id="COG0143">
    <property type="taxonomic scope" value="Bacteria"/>
</dbReference>
<dbReference type="HOGENOM" id="CLU_009710_7_0_4"/>
<dbReference type="OrthoDB" id="9810191at2"/>
<dbReference type="Proteomes" id="UP000002596">
    <property type="component" value="Chromosome"/>
</dbReference>
<dbReference type="GO" id="GO:0005829">
    <property type="term" value="C:cytosol"/>
    <property type="evidence" value="ECO:0007669"/>
    <property type="project" value="TreeGrafter"/>
</dbReference>
<dbReference type="GO" id="GO:0005524">
    <property type="term" value="F:ATP binding"/>
    <property type="evidence" value="ECO:0007669"/>
    <property type="project" value="UniProtKB-UniRule"/>
</dbReference>
<dbReference type="GO" id="GO:0046872">
    <property type="term" value="F:metal ion binding"/>
    <property type="evidence" value="ECO:0007669"/>
    <property type="project" value="UniProtKB-KW"/>
</dbReference>
<dbReference type="GO" id="GO:0004825">
    <property type="term" value="F:methionine-tRNA ligase activity"/>
    <property type="evidence" value="ECO:0007669"/>
    <property type="project" value="UniProtKB-UniRule"/>
</dbReference>
<dbReference type="GO" id="GO:0000049">
    <property type="term" value="F:tRNA binding"/>
    <property type="evidence" value="ECO:0007669"/>
    <property type="project" value="UniProtKB-KW"/>
</dbReference>
<dbReference type="GO" id="GO:0006431">
    <property type="term" value="P:methionyl-tRNA aminoacylation"/>
    <property type="evidence" value="ECO:0007669"/>
    <property type="project" value="UniProtKB-UniRule"/>
</dbReference>
<dbReference type="CDD" id="cd07957">
    <property type="entry name" value="Anticodon_Ia_Met"/>
    <property type="match status" value="1"/>
</dbReference>
<dbReference type="CDD" id="cd00814">
    <property type="entry name" value="MetRS_core"/>
    <property type="match status" value="1"/>
</dbReference>
<dbReference type="CDD" id="cd02800">
    <property type="entry name" value="tRNA_bind_EcMetRS_like"/>
    <property type="match status" value="1"/>
</dbReference>
<dbReference type="FunFam" id="2.20.28.20:FF:000001">
    <property type="entry name" value="Methionine--tRNA ligase"/>
    <property type="match status" value="1"/>
</dbReference>
<dbReference type="FunFam" id="2.40.50.140:FF:000042">
    <property type="entry name" value="Methionine--tRNA ligase"/>
    <property type="match status" value="1"/>
</dbReference>
<dbReference type="Gene3D" id="3.40.50.620">
    <property type="entry name" value="HUPs"/>
    <property type="match status" value="1"/>
</dbReference>
<dbReference type="Gene3D" id="1.10.730.10">
    <property type="entry name" value="Isoleucyl-tRNA Synthetase, Domain 1"/>
    <property type="match status" value="1"/>
</dbReference>
<dbReference type="Gene3D" id="2.20.28.20">
    <property type="entry name" value="Methionyl-tRNA synthetase, Zn-domain"/>
    <property type="match status" value="1"/>
</dbReference>
<dbReference type="Gene3D" id="2.40.50.140">
    <property type="entry name" value="Nucleic acid-binding proteins"/>
    <property type="match status" value="1"/>
</dbReference>
<dbReference type="HAMAP" id="MF_00098">
    <property type="entry name" value="Met_tRNA_synth_type1"/>
    <property type="match status" value="1"/>
</dbReference>
<dbReference type="InterPro" id="IPR001412">
    <property type="entry name" value="aa-tRNA-synth_I_CS"/>
</dbReference>
<dbReference type="InterPro" id="IPR041872">
    <property type="entry name" value="Anticodon_Met"/>
</dbReference>
<dbReference type="InterPro" id="IPR004495">
    <property type="entry name" value="Met-tRNA-synth_bsu_C"/>
</dbReference>
<dbReference type="InterPro" id="IPR023458">
    <property type="entry name" value="Met-tRNA_ligase_1"/>
</dbReference>
<dbReference type="InterPro" id="IPR014758">
    <property type="entry name" value="Met-tRNA_synth"/>
</dbReference>
<dbReference type="InterPro" id="IPR015413">
    <property type="entry name" value="Methionyl/Leucyl_tRNA_Synth"/>
</dbReference>
<dbReference type="InterPro" id="IPR033911">
    <property type="entry name" value="MetRS_core"/>
</dbReference>
<dbReference type="InterPro" id="IPR029038">
    <property type="entry name" value="MetRS_Zn"/>
</dbReference>
<dbReference type="InterPro" id="IPR012340">
    <property type="entry name" value="NA-bd_OB-fold"/>
</dbReference>
<dbReference type="InterPro" id="IPR014729">
    <property type="entry name" value="Rossmann-like_a/b/a_fold"/>
</dbReference>
<dbReference type="InterPro" id="IPR002547">
    <property type="entry name" value="tRNA-bd_dom"/>
</dbReference>
<dbReference type="InterPro" id="IPR009080">
    <property type="entry name" value="tRNAsynth_Ia_anticodon-bd"/>
</dbReference>
<dbReference type="NCBIfam" id="TIGR00398">
    <property type="entry name" value="metG"/>
    <property type="match status" value="1"/>
</dbReference>
<dbReference type="NCBIfam" id="TIGR00399">
    <property type="entry name" value="metG_C_term"/>
    <property type="match status" value="1"/>
</dbReference>
<dbReference type="NCBIfam" id="NF001100">
    <property type="entry name" value="PRK00133.1"/>
    <property type="match status" value="1"/>
</dbReference>
<dbReference type="PANTHER" id="PTHR45765">
    <property type="entry name" value="METHIONINE--TRNA LIGASE"/>
    <property type="match status" value="1"/>
</dbReference>
<dbReference type="PANTHER" id="PTHR45765:SF1">
    <property type="entry name" value="METHIONINE--TRNA LIGASE, CYTOPLASMIC"/>
    <property type="match status" value="1"/>
</dbReference>
<dbReference type="Pfam" id="PF19303">
    <property type="entry name" value="Anticodon_3"/>
    <property type="match status" value="1"/>
</dbReference>
<dbReference type="Pfam" id="PF09334">
    <property type="entry name" value="tRNA-synt_1g"/>
    <property type="match status" value="1"/>
</dbReference>
<dbReference type="Pfam" id="PF01588">
    <property type="entry name" value="tRNA_bind"/>
    <property type="match status" value="1"/>
</dbReference>
<dbReference type="PRINTS" id="PR01041">
    <property type="entry name" value="TRNASYNTHMET"/>
</dbReference>
<dbReference type="SUPFAM" id="SSF47323">
    <property type="entry name" value="Anticodon-binding domain of a subclass of class I aminoacyl-tRNA synthetases"/>
    <property type="match status" value="1"/>
</dbReference>
<dbReference type="SUPFAM" id="SSF57770">
    <property type="entry name" value="Methionyl-tRNA synthetase (MetRS), Zn-domain"/>
    <property type="match status" value="1"/>
</dbReference>
<dbReference type="SUPFAM" id="SSF50249">
    <property type="entry name" value="Nucleic acid-binding proteins"/>
    <property type="match status" value="1"/>
</dbReference>
<dbReference type="SUPFAM" id="SSF52374">
    <property type="entry name" value="Nucleotidylyl transferase"/>
    <property type="match status" value="1"/>
</dbReference>
<dbReference type="PROSITE" id="PS00178">
    <property type="entry name" value="AA_TRNA_LIGASE_I"/>
    <property type="match status" value="1"/>
</dbReference>
<dbReference type="PROSITE" id="PS50886">
    <property type="entry name" value="TRBD"/>
    <property type="match status" value="1"/>
</dbReference>
<accession>A1TTU1</accession>
<comment type="function">
    <text evidence="1">Is required not only for elongation of protein synthesis but also for the initiation of all mRNA translation through initiator tRNA(fMet) aminoacylation.</text>
</comment>
<comment type="catalytic activity">
    <reaction evidence="1">
        <text>tRNA(Met) + L-methionine + ATP = L-methionyl-tRNA(Met) + AMP + diphosphate</text>
        <dbReference type="Rhea" id="RHEA:13481"/>
        <dbReference type="Rhea" id="RHEA-COMP:9667"/>
        <dbReference type="Rhea" id="RHEA-COMP:9698"/>
        <dbReference type="ChEBI" id="CHEBI:30616"/>
        <dbReference type="ChEBI" id="CHEBI:33019"/>
        <dbReference type="ChEBI" id="CHEBI:57844"/>
        <dbReference type="ChEBI" id="CHEBI:78442"/>
        <dbReference type="ChEBI" id="CHEBI:78530"/>
        <dbReference type="ChEBI" id="CHEBI:456215"/>
        <dbReference type="EC" id="6.1.1.10"/>
    </reaction>
</comment>
<comment type="cofactor">
    <cofactor evidence="1">
        <name>Zn(2+)</name>
        <dbReference type="ChEBI" id="CHEBI:29105"/>
    </cofactor>
    <text evidence="1">Binds 1 zinc ion per subunit.</text>
</comment>
<comment type="subunit">
    <text evidence="1">Homodimer.</text>
</comment>
<comment type="subcellular location">
    <subcellularLocation>
        <location evidence="1">Cytoplasm</location>
    </subcellularLocation>
</comment>
<comment type="similarity">
    <text evidence="1">Belongs to the class-I aminoacyl-tRNA synthetase family. MetG type 1 subfamily.</text>
</comment>
<sequence length="706" mass="77578">MPARKIFVTTALPYANGNFHIGHIMEYIQADIWVRFQRMQGAEVNFVGADDTHGAPIMIAAEKAGKTPQQFVADIAAGRKPYLEGFHIRFDNWHSTDAPENHELARQIYRDLQAAGLIETRTIEQFFDPEKNMFLPDRFIKGECPRCHARDQYGDNCENCGAVYAPTDLIEPYSALSGAKPVLKSSDHFFFQLSDPRCVAFLQEWTQDGRLQPEVANKVKEWFSVRTNPDGTTSEGLGDWDISRDAPYFGIEIPDAPGKYFYVWLDAPVGYLASLKNLLEKRGQSYDDYVADPQLEQVHFIGKDIVTFHTLFWPAMLKFSGRKTPDAVFVHGFLTVNNGEKMSKSRGTGLDPLKYLGLGMNAEWLRYYLAAKLNGRNEDIDFNAEDFMARVNSDLIGKFVNIASRAAGFLTKRFGGRLGAPDADGAALLEALRAQAGAIAEAYERRDTARAVRETMLLADRVNEYVDARKPWELAKQEGQEAALQAACTTCIEAFRLLTLYLKPVLPALAAQVEAFLNVQPLTFADAPALLGEGHAIGAYQHLMQRVDIKQLEALFEVPAAAAAPAAPAANAAAEASAAAGAATEAPGGEHIAPTITIDDFAKIDLRIALIVNCEPVEGSTKLLRLTLDVGEGRHRNVFSGIASAYRPEELVGKLTVMVANLAPRKMKFGVSEGMVLAASHGDEKAHPGIHVLNPWPGATPGMRVR</sequence>
<evidence type="ECO:0000255" key="1">
    <source>
        <dbReference type="HAMAP-Rule" id="MF_00098"/>
    </source>
</evidence>
<reference key="1">
    <citation type="submission" date="2006-12" db="EMBL/GenBank/DDBJ databases">
        <title>Complete sequence of Acidovorax avenae subsp. citrulli AAC00-1.</title>
        <authorList>
            <person name="Copeland A."/>
            <person name="Lucas S."/>
            <person name="Lapidus A."/>
            <person name="Barry K."/>
            <person name="Detter J.C."/>
            <person name="Glavina del Rio T."/>
            <person name="Dalin E."/>
            <person name="Tice H."/>
            <person name="Pitluck S."/>
            <person name="Kiss H."/>
            <person name="Brettin T."/>
            <person name="Bruce D."/>
            <person name="Han C."/>
            <person name="Tapia R."/>
            <person name="Gilna P."/>
            <person name="Schmutz J."/>
            <person name="Larimer F."/>
            <person name="Land M."/>
            <person name="Hauser L."/>
            <person name="Kyrpides N."/>
            <person name="Kim E."/>
            <person name="Stahl D."/>
            <person name="Richardson P."/>
        </authorList>
    </citation>
    <scope>NUCLEOTIDE SEQUENCE [LARGE SCALE GENOMIC DNA]</scope>
    <source>
        <strain>AAC00-1</strain>
    </source>
</reference>
<organism>
    <name type="scientific">Paracidovorax citrulli (strain AAC00-1)</name>
    <name type="common">Acidovorax citrulli</name>
    <dbReference type="NCBI Taxonomy" id="397945"/>
    <lineage>
        <taxon>Bacteria</taxon>
        <taxon>Pseudomonadati</taxon>
        <taxon>Pseudomonadota</taxon>
        <taxon>Betaproteobacteria</taxon>
        <taxon>Burkholderiales</taxon>
        <taxon>Comamonadaceae</taxon>
        <taxon>Paracidovorax</taxon>
    </lineage>
</organism>
<proteinExistence type="inferred from homology"/>
<protein>
    <recommendedName>
        <fullName evidence="1">Methionine--tRNA ligase</fullName>
        <ecNumber evidence="1">6.1.1.10</ecNumber>
    </recommendedName>
    <alternativeName>
        <fullName evidence="1">Methionyl-tRNA synthetase</fullName>
        <shortName evidence="1">MetRS</shortName>
    </alternativeName>
</protein>
<name>SYM_PARC0</name>
<keyword id="KW-0030">Aminoacyl-tRNA synthetase</keyword>
<keyword id="KW-0067">ATP-binding</keyword>
<keyword id="KW-0963">Cytoplasm</keyword>
<keyword id="KW-0436">Ligase</keyword>
<keyword id="KW-0479">Metal-binding</keyword>
<keyword id="KW-0547">Nucleotide-binding</keyword>
<keyword id="KW-0648">Protein biosynthesis</keyword>
<keyword id="KW-0694">RNA-binding</keyword>
<keyword id="KW-0820">tRNA-binding</keyword>
<keyword id="KW-0862">Zinc</keyword>
<feature type="chain" id="PRO_0000331771" description="Methionine--tRNA ligase">
    <location>
        <begin position="1"/>
        <end position="706"/>
    </location>
</feature>
<feature type="domain" description="tRNA-binding" evidence="1">
    <location>
        <begin position="600"/>
        <end position="706"/>
    </location>
</feature>
<feature type="short sequence motif" description="'HIGH' region">
    <location>
        <begin position="13"/>
        <end position="23"/>
    </location>
</feature>
<feature type="short sequence motif" description="'KMSKS' region">
    <location>
        <begin position="341"/>
        <end position="345"/>
    </location>
</feature>
<feature type="binding site" evidence="1">
    <location>
        <position position="144"/>
    </location>
    <ligand>
        <name>Zn(2+)</name>
        <dbReference type="ChEBI" id="CHEBI:29105"/>
    </ligand>
</feature>
<feature type="binding site" evidence="1">
    <location>
        <position position="147"/>
    </location>
    <ligand>
        <name>Zn(2+)</name>
        <dbReference type="ChEBI" id="CHEBI:29105"/>
    </ligand>
</feature>
<feature type="binding site" evidence="1">
    <location>
        <position position="157"/>
    </location>
    <ligand>
        <name>Zn(2+)</name>
        <dbReference type="ChEBI" id="CHEBI:29105"/>
    </ligand>
</feature>
<feature type="binding site" evidence="1">
    <location>
        <position position="160"/>
    </location>
    <ligand>
        <name>Zn(2+)</name>
        <dbReference type="ChEBI" id="CHEBI:29105"/>
    </ligand>
</feature>
<feature type="binding site" evidence="1">
    <location>
        <position position="344"/>
    </location>
    <ligand>
        <name>ATP</name>
        <dbReference type="ChEBI" id="CHEBI:30616"/>
    </ligand>
</feature>
<gene>
    <name evidence="1" type="primary">metG</name>
    <name type="ordered locus">Aave_3834</name>
</gene>